<evidence type="ECO:0000255" key="1">
    <source>
        <dbReference type="HAMAP-Rule" id="MF_00167"/>
    </source>
</evidence>
<feature type="chain" id="PRO_1000123632" description="Translational regulator CsrA">
    <location>
        <begin position="1"/>
        <end position="65"/>
    </location>
</feature>
<protein>
    <recommendedName>
        <fullName evidence="1">Translational regulator CsrA</fullName>
    </recommendedName>
    <alternativeName>
        <fullName evidence="1">Carbon storage regulator</fullName>
    </alternativeName>
</protein>
<organism>
    <name type="scientific">Shewanella baltica (strain OS223)</name>
    <dbReference type="NCBI Taxonomy" id="407976"/>
    <lineage>
        <taxon>Bacteria</taxon>
        <taxon>Pseudomonadati</taxon>
        <taxon>Pseudomonadota</taxon>
        <taxon>Gammaproteobacteria</taxon>
        <taxon>Alteromonadales</taxon>
        <taxon>Shewanellaceae</taxon>
        <taxon>Shewanella</taxon>
    </lineage>
</organism>
<keyword id="KW-0010">Activator</keyword>
<keyword id="KW-0963">Cytoplasm</keyword>
<keyword id="KW-0678">Repressor</keyword>
<keyword id="KW-0694">RNA-binding</keyword>
<keyword id="KW-0810">Translation regulation</keyword>
<reference key="1">
    <citation type="submission" date="2008-12" db="EMBL/GenBank/DDBJ databases">
        <title>Complete sequence of chromosome of Shewanella baltica OS223.</title>
        <authorList>
            <consortium name="US DOE Joint Genome Institute"/>
            <person name="Lucas S."/>
            <person name="Copeland A."/>
            <person name="Lapidus A."/>
            <person name="Glavina del Rio T."/>
            <person name="Dalin E."/>
            <person name="Tice H."/>
            <person name="Bruce D."/>
            <person name="Goodwin L."/>
            <person name="Pitluck S."/>
            <person name="Chertkov O."/>
            <person name="Meincke L."/>
            <person name="Brettin T."/>
            <person name="Detter J.C."/>
            <person name="Han C."/>
            <person name="Kuske C.R."/>
            <person name="Larimer F."/>
            <person name="Land M."/>
            <person name="Hauser L."/>
            <person name="Kyrpides N."/>
            <person name="Ovchinnikova G."/>
            <person name="Brettar I."/>
            <person name="Rodrigues J."/>
            <person name="Konstantinidis K."/>
            <person name="Tiedje J."/>
        </authorList>
    </citation>
    <scope>NUCLEOTIDE SEQUENCE [LARGE SCALE GENOMIC DNA]</scope>
    <source>
        <strain>OS223</strain>
    </source>
</reference>
<accession>B8E8U6</accession>
<dbReference type="EMBL" id="CP001252">
    <property type="protein sequence ID" value="ACK45762.1"/>
    <property type="molecule type" value="Genomic_DNA"/>
</dbReference>
<dbReference type="RefSeq" id="WP_006082602.1">
    <property type="nucleotide sequence ID" value="NC_011663.1"/>
</dbReference>
<dbReference type="SMR" id="B8E8U6"/>
<dbReference type="GeneID" id="94727129"/>
<dbReference type="KEGG" id="sbp:Sbal223_1252"/>
<dbReference type="HOGENOM" id="CLU_164837_2_2_6"/>
<dbReference type="Proteomes" id="UP000002507">
    <property type="component" value="Chromosome"/>
</dbReference>
<dbReference type="GO" id="GO:0005829">
    <property type="term" value="C:cytosol"/>
    <property type="evidence" value="ECO:0007669"/>
    <property type="project" value="TreeGrafter"/>
</dbReference>
<dbReference type="GO" id="GO:0048027">
    <property type="term" value="F:mRNA 5'-UTR binding"/>
    <property type="evidence" value="ECO:0007669"/>
    <property type="project" value="UniProtKB-UniRule"/>
</dbReference>
<dbReference type="GO" id="GO:0006402">
    <property type="term" value="P:mRNA catabolic process"/>
    <property type="evidence" value="ECO:0007669"/>
    <property type="project" value="InterPro"/>
</dbReference>
<dbReference type="GO" id="GO:0045947">
    <property type="term" value="P:negative regulation of translational initiation"/>
    <property type="evidence" value="ECO:0007669"/>
    <property type="project" value="UniProtKB-UniRule"/>
</dbReference>
<dbReference type="GO" id="GO:0045948">
    <property type="term" value="P:positive regulation of translational initiation"/>
    <property type="evidence" value="ECO:0007669"/>
    <property type="project" value="UniProtKB-UniRule"/>
</dbReference>
<dbReference type="GO" id="GO:0006109">
    <property type="term" value="P:regulation of carbohydrate metabolic process"/>
    <property type="evidence" value="ECO:0007669"/>
    <property type="project" value="UniProtKB-UniRule"/>
</dbReference>
<dbReference type="FunFam" id="2.60.40.4380:FF:000001">
    <property type="entry name" value="Translational regulator CsrA"/>
    <property type="match status" value="1"/>
</dbReference>
<dbReference type="Gene3D" id="2.60.40.4380">
    <property type="entry name" value="Translational regulator CsrA"/>
    <property type="match status" value="1"/>
</dbReference>
<dbReference type="HAMAP" id="MF_00167">
    <property type="entry name" value="CsrA"/>
    <property type="match status" value="1"/>
</dbReference>
<dbReference type="InterPro" id="IPR003751">
    <property type="entry name" value="CsrA"/>
</dbReference>
<dbReference type="InterPro" id="IPR036107">
    <property type="entry name" value="CsrA_sf"/>
</dbReference>
<dbReference type="NCBIfam" id="TIGR00202">
    <property type="entry name" value="csrA"/>
    <property type="match status" value="1"/>
</dbReference>
<dbReference type="NCBIfam" id="NF002469">
    <property type="entry name" value="PRK01712.1"/>
    <property type="match status" value="1"/>
</dbReference>
<dbReference type="PANTHER" id="PTHR34984">
    <property type="entry name" value="CARBON STORAGE REGULATOR"/>
    <property type="match status" value="1"/>
</dbReference>
<dbReference type="PANTHER" id="PTHR34984:SF1">
    <property type="entry name" value="CARBON STORAGE REGULATOR"/>
    <property type="match status" value="1"/>
</dbReference>
<dbReference type="Pfam" id="PF02599">
    <property type="entry name" value="CsrA"/>
    <property type="match status" value="1"/>
</dbReference>
<dbReference type="SUPFAM" id="SSF117130">
    <property type="entry name" value="CsrA-like"/>
    <property type="match status" value="1"/>
</dbReference>
<proteinExistence type="inferred from homology"/>
<comment type="function">
    <text evidence="1">A key translational regulator that binds mRNA to regulate translation initiation and/or mRNA stability. Mediates global changes in gene expression, shifting from rapid growth to stress survival by linking envelope stress, the stringent response and the catabolite repression systems. Usually binds in the 5'-UTR; binding at or near the Shine-Dalgarno sequence prevents ribosome-binding, repressing translation, binding elsewhere in the 5'-UTR can activate translation and/or stabilize the mRNA. Its function is antagonized by small RNA(s).</text>
</comment>
<comment type="subunit">
    <text evidence="1">Homodimer; the beta-strands of each monomer intercalate to form a hydrophobic core, while the alpha-helices form wings that extend away from the core.</text>
</comment>
<comment type="subcellular location">
    <subcellularLocation>
        <location evidence="1">Cytoplasm</location>
    </subcellularLocation>
</comment>
<comment type="similarity">
    <text evidence="1">Belongs to the CsrA/RsmA family.</text>
</comment>
<gene>
    <name evidence="1" type="primary">csrA</name>
    <name type="ordered locus">Sbal223_1252</name>
</gene>
<sequence length="65" mass="7125">MLILTRRVGETLMIGDEVTVTVLGVKGNQVRIGVNAPKEVSVHREEIYQRIQSEKSGTPSEGGNF</sequence>
<name>CSRA_SHEB2</name>